<feature type="chain" id="PRO_0000448237" description="GAS2-like protein 2B">
    <location>
        <begin position="1"/>
        <end position="956"/>
    </location>
</feature>
<feature type="domain" description="Calponin-homology (CH)" evidence="1">
    <location>
        <begin position="23"/>
        <end position="150"/>
    </location>
</feature>
<feature type="domain" description="GAR" evidence="2">
    <location>
        <begin position="191"/>
        <end position="263"/>
    </location>
</feature>
<feature type="region of interest" description="Disordered" evidence="3">
    <location>
        <begin position="332"/>
        <end position="361"/>
    </location>
</feature>
<feature type="region of interest" description="Disordered" evidence="3">
    <location>
        <begin position="378"/>
        <end position="406"/>
    </location>
</feature>
<feature type="region of interest" description="Disordered" evidence="3">
    <location>
        <begin position="853"/>
        <end position="885"/>
    </location>
</feature>
<feature type="region of interest" description="Disordered" evidence="3">
    <location>
        <begin position="914"/>
        <end position="956"/>
    </location>
</feature>
<feature type="compositionally biased region" description="Polar residues" evidence="3">
    <location>
        <begin position="332"/>
        <end position="353"/>
    </location>
</feature>
<feature type="compositionally biased region" description="Polar residues" evidence="3">
    <location>
        <begin position="381"/>
        <end position="390"/>
    </location>
</feature>
<feature type="compositionally biased region" description="Basic and acidic residues" evidence="3">
    <location>
        <begin position="859"/>
        <end position="868"/>
    </location>
</feature>
<sequence length="956" mass="108436">MSTHQGGSVHSIRPFKSSEEYLYAMKEDLAEWLKDMYHLEIIVDNFIEILENGSVLCQHANNVTEVAREFFVQYPHLAEKLQLPKSGVKLNMMAQPGSFLARDNVSNFIQWCRKEMDIKDVIMFETEDLVHRKNEKNFLLCLLELARRASRFGMSAPMLIQMEEQIEEEIRQEMDLPPQEIPVPKPQRKLCDFKNLDQMVQNLVSRCTCPVQFSMVKVSEGKYRVGESSTLIFVRILRKHVMVRVGGGWDTLAHYLDKHDPCHCASLSHKPAIKLGSLQKQVSAVHEVKTQLTPRLDNPSKLETTLILSRSQSPLPPVEWRTYSAERTRTISSSYSLDDNENSPSFKNSQTPPNDRRSMSIGAHERSATLSRKLFTEDTQDPQQLGNPQSGHYRHHHSTSSLASQLTGSEEEYSYISEVFSESQSGRQMGKHTVMNLKEPPKRDAFLSHTQSANRKVISATQQNNIQQGLIIGHQSVTVQDSRPKTPSRFIQPPSPSKQIHFFYNQQNKGVEQNIKTQTNSCTRSSSPVKQTSLTYKQEFNKRPATPSRINYSSSQYKDGDKSAATEIITFHDHVRAKPSVSSEERTIRTGRATPTIHLNRENTNLPLKMQPKPNVTESSHSIERDCMYTPLPIDPEQEKQIYRSLEDEIRTNIKILEGDSEENNPENDTAAHDFNVLGKSTLRLSSSTSKTPRGQEGVPRSGVYINTAWQSGASYDDVITELTKGHVKLNNVDVENWISKIPLKGMVKEAHTSQRNKVRENGHTASLVRKKTLSTEMKGSKQKQLPSQIARQLALENKKKTVENVLEKQVSTVSGDSKEAIPEKIKLSQGLKPKKSLKKPERVPSIYKLKLRPKIRPRRDNRPEKKPSRIPTPVSYRQVPSRNNAKALKRTQSYQANKVSVAQTLNESQISAVNSEDLDSGDEICEHSAPLQAVETPITGENNQSRTEEEEESWV</sequence>
<gene>
    <name evidence="8" type="primary">gas2l2.S</name>
    <name evidence="6" type="ORF">XELAEV_18015306mg</name>
</gene>
<reference evidence="7" key="1">
    <citation type="journal article" date="2016" name="Nature">
        <title>Genome evolution in the allotetraploid frog Xenopus laevis.</title>
        <authorList>
            <person name="Session A.M."/>
            <person name="Uno Y."/>
            <person name="Kwon T."/>
            <person name="Chapman J.A."/>
            <person name="Toyoda A."/>
            <person name="Takahashi S."/>
            <person name="Fukui A."/>
            <person name="Hikosaka A."/>
            <person name="Suzuki A."/>
            <person name="Kondo M."/>
            <person name="van Heeringen S.J."/>
            <person name="Quigley I."/>
            <person name="Heinz S."/>
            <person name="Ogino H."/>
            <person name="Ochi H."/>
            <person name="Hellsten U."/>
            <person name="Lyons J.B."/>
            <person name="Simakov O."/>
            <person name="Putnam N."/>
            <person name="Stites J."/>
            <person name="Kuroki Y."/>
            <person name="Tanaka T."/>
            <person name="Michiue T."/>
            <person name="Watanabe M."/>
            <person name="Bogdanovic O."/>
            <person name="Lister R."/>
            <person name="Georgiou G."/>
            <person name="Paranjpe S.S."/>
            <person name="van Kruijsbergen I."/>
            <person name="Shu S."/>
            <person name="Carlson J."/>
            <person name="Kinoshita T."/>
            <person name="Ohta Y."/>
            <person name="Mawaribuchi S."/>
            <person name="Jenkins J."/>
            <person name="Grimwood J."/>
            <person name="Schmutz J."/>
            <person name="Mitros T."/>
            <person name="Mozaffari S.V."/>
            <person name="Suzuki Y."/>
            <person name="Haramoto Y."/>
            <person name="Yamamoto T.S."/>
            <person name="Takagi C."/>
            <person name="Heald R."/>
            <person name="Miller K."/>
            <person name="Haudenschild C."/>
            <person name="Kitzman J."/>
            <person name="Nakayama T."/>
            <person name="Izutsu Y."/>
            <person name="Robert J."/>
            <person name="Fortriede J."/>
            <person name="Burns K."/>
            <person name="Lotay V."/>
            <person name="Karimi K."/>
            <person name="Yasuoka Y."/>
            <person name="Dichmann D.S."/>
            <person name="Flajnik M.F."/>
            <person name="Houston D.W."/>
            <person name="Shendure J."/>
            <person name="DuPasquier L."/>
            <person name="Vize P.D."/>
            <person name="Zorn A.M."/>
            <person name="Ito M."/>
            <person name="Marcotte E.M."/>
            <person name="Wallingford J.B."/>
            <person name="Ito Y."/>
            <person name="Asashima M."/>
            <person name="Ueno N."/>
            <person name="Matsuda Y."/>
            <person name="Veenstra G.J."/>
            <person name="Fujiyama A."/>
            <person name="Harland R.M."/>
            <person name="Taira M."/>
            <person name="Rokhsar D.S."/>
        </authorList>
    </citation>
    <scope>NUCLEOTIDE SEQUENCE [LARGE SCALE GENOMIC DNA]</scope>
    <source>
        <strain evidence="7">J</strain>
    </source>
</reference>
<reference evidence="5" key="2">
    <citation type="journal article" date="2019" name="Am. J. Hum. Genet.">
        <title>Lack of GAS2L2 Causes PCD by Impairing Cilia Orientation and Mucociliary Clearance.</title>
        <authorList>
            <person name="Bustamante-Marin X.M."/>
            <person name="Yin W.N."/>
            <person name="Sears P.R."/>
            <person name="Werner M.E."/>
            <person name="Brotslaw E.J."/>
            <person name="Mitchell B.J."/>
            <person name="Jania C.M."/>
            <person name="Zeman K.L."/>
            <person name="Rogers T.D."/>
            <person name="Herring L.E."/>
            <person name="Refabert L."/>
            <person name="Thomas L."/>
            <person name="Amselem S."/>
            <person name="Escudier E."/>
            <person name="Legendre M."/>
            <person name="Grubb B.R."/>
            <person name="Knowles M.R."/>
            <person name="Zariwala M.A."/>
            <person name="Ostrowski L.E."/>
        </authorList>
    </citation>
    <scope>FUNCTION</scope>
    <scope>SUBCELLULAR LOCATION</scope>
    <scope>DISRUPTION PHENOTYPE</scope>
</reference>
<accession>A0A1L8H8C0</accession>
<dbReference type="EMBL" id="CM004469">
    <property type="protein sequence ID" value="OCT92251.1"/>
    <property type="molecule type" value="Genomic_DNA"/>
</dbReference>
<dbReference type="RefSeq" id="XP_018105119.1">
    <property type="nucleotide sequence ID" value="XM_018249630.2"/>
</dbReference>
<dbReference type="SMR" id="A0A1L8H8C0"/>
<dbReference type="STRING" id="8355.A0A1L8H8C0"/>
<dbReference type="PaxDb" id="8355-A0A1L8H8C0"/>
<dbReference type="GeneID" id="108709619"/>
<dbReference type="KEGG" id="xla:108709619"/>
<dbReference type="AGR" id="Xenbase:XB-GENE-17330204"/>
<dbReference type="CTD" id="108709619"/>
<dbReference type="Xenbase" id="XB-GENE-17330204">
    <property type="gene designation" value="gas2l2.S"/>
</dbReference>
<dbReference type="OMA" id="DEICEHS"/>
<dbReference type="OrthoDB" id="206130at2759"/>
<dbReference type="Proteomes" id="UP000186698">
    <property type="component" value="Chromosome 2S"/>
</dbReference>
<dbReference type="Proteomes" id="UP000694892">
    <property type="component" value="Chromosome 2S"/>
</dbReference>
<dbReference type="Bgee" id="108709619">
    <property type="expression patterns" value="Expressed in neurula embryo and 1 other cell type or tissue"/>
</dbReference>
<dbReference type="GO" id="GO:0005884">
    <property type="term" value="C:actin filament"/>
    <property type="evidence" value="ECO:0007669"/>
    <property type="project" value="TreeGrafter"/>
</dbReference>
<dbReference type="GO" id="GO:0042995">
    <property type="term" value="C:cell projection"/>
    <property type="evidence" value="ECO:0007669"/>
    <property type="project" value="UniProtKB-KW"/>
</dbReference>
<dbReference type="GO" id="GO:0005737">
    <property type="term" value="C:cytoplasm"/>
    <property type="evidence" value="ECO:0000318"/>
    <property type="project" value="GO_Central"/>
</dbReference>
<dbReference type="GO" id="GO:0035371">
    <property type="term" value="C:microtubule plus-end"/>
    <property type="evidence" value="ECO:0007669"/>
    <property type="project" value="TreeGrafter"/>
</dbReference>
<dbReference type="GO" id="GO:0001725">
    <property type="term" value="C:stress fiber"/>
    <property type="evidence" value="ECO:0007669"/>
    <property type="project" value="TreeGrafter"/>
</dbReference>
<dbReference type="GO" id="GO:0051015">
    <property type="term" value="F:actin filament binding"/>
    <property type="evidence" value="ECO:0000318"/>
    <property type="project" value="GO_Central"/>
</dbReference>
<dbReference type="GO" id="GO:0008093">
    <property type="term" value="F:cytoskeletal anchor activity"/>
    <property type="evidence" value="ECO:0007669"/>
    <property type="project" value="TreeGrafter"/>
</dbReference>
<dbReference type="GO" id="GO:0008017">
    <property type="term" value="F:microtubule binding"/>
    <property type="evidence" value="ECO:0007669"/>
    <property type="project" value="InterPro"/>
</dbReference>
<dbReference type="GO" id="GO:0051764">
    <property type="term" value="P:actin crosslink formation"/>
    <property type="evidence" value="ECO:0000318"/>
    <property type="project" value="GO_Central"/>
</dbReference>
<dbReference type="GO" id="GO:0001578">
    <property type="term" value="P:microtubule bundle formation"/>
    <property type="evidence" value="ECO:0000318"/>
    <property type="project" value="GO_Central"/>
</dbReference>
<dbReference type="GO" id="GO:1904825">
    <property type="term" value="P:protein localization to microtubule plus-end"/>
    <property type="evidence" value="ECO:0000318"/>
    <property type="project" value="GO_Central"/>
</dbReference>
<dbReference type="GO" id="GO:0060296">
    <property type="term" value="P:regulation of cilium beat frequency involved in ciliary motility"/>
    <property type="evidence" value="ECO:0000315"/>
    <property type="project" value="UniProtKB"/>
</dbReference>
<dbReference type="GO" id="GO:0031110">
    <property type="term" value="P:regulation of microtubule polymerization or depolymerization"/>
    <property type="evidence" value="ECO:0000318"/>
    <property type="project" value="GO_Central"/>
</dbReference>
<dbReference type="CDD" id="cd21268">
    <property type="entry name" value="CH_GAS2L1_2"/>
    <property type="match status" value="1"/>
</dbReference>
<dbReference type="FunFam" id="1.10.418.10:FF:000047">
    <property type="entry name" value="Growth arrest specific 2 like 1"/>
    <property type="match status" value="1"/>
</dbReference>
<dbReference type="Gene3D" id="1.10.418.10">
    <property type="entry name" value="Calponin-like domain"/>
    <property type="match status" value="1"/>
</dbReference>
<dbReference type="Gene3D" id="3.30.920.20">
    <property type="entry name" value="Gas2-like domain"/>
    <property type="match status" value="1"/>
</dbReference>
<dbReference type="InterPro" id="IPR001715">
    <property type="entry name" value="CH_dom"/>
</dbReference>
<dbReference type="InterPro" id="IPR036872">
    <property type="entry name" value="CH_dom_sf"/>
</dbReference>
<dbReference type="InterPro" id="IPR003108">
    <property type="entry name" value="GAR_dom"/>
</dbReference>
<dbReference type="InterPro" id="IPR036534">
    <property type="entry name" value="GAR_dom_sf"/>
</dbReference>
<dbReference type="PANTHER" id="PTHR46756:SF26">
    <property type="entry name" value="GAS2-LIKE PROTEIN 2B"/>
    <property type="match status" value="1"/>
</dbReference>
<dbReference type="PANTHER" id="PTHR46756">
    <property type="entry name" value="TRANSGELIN"/>
    <property type="match status" value="1"/>
</dbReference>
<dbReference type="Pfam" id="PF00307">
    <property type="entry name" value="CH"/>
    <property type="match status" value="1"/>
</dbReference>
<dbReference type="Pfam" id="PF02187">
    <property type="entry name" value="GAS2"/>
    <property type="match status" value="1"/>
</dbReference>
<dbReference type="SMART" id="SM00033">
    <property type="entry name" value="CH"/>
    <property type="match status" value="1"/>
</dbReference>
<dbReference type="SMART" id="SM00243">
    <property type="entry name" value="GAS2"/>
    <property type="match status" value="1"/>
</dbReference>
<dbReference type="SUPFAM" id="SSF47576">
    <property type="entry name" value="Calponin-homology domain, CH-domain"/>
    <property type="match status" value="1"/>
</dbReference>
<dbReference type="SUPFAM" id="SSF143575">
    <property type="entry name" value="GAS2 domain-like"/>
    <property type="match status" value="1"/>
</dbReference>
<dbReference type="PROSITE" id="PS50021">
    <property type="entry name" value="CH"/>
    <property type="match status" value="1"/>
</dbReference>
<dbReference type="PROSITE" id="PS51460">
    <property type="entry name" value="GAR"/>
    <property type="match status" value="1"/>
</dbReference>
<organism>
    <name type="scientific">Xenopus laevis</name>
    <name type="common">African clawed frog</name>
    <dbReference type="NCBI Taxonomy" id="8355"/>
    <lineage>
        <taxon>Eukaryota</taxon>
        <taxon>Metazoa</taxon>
        <taxon>Chordata</taxon>
        <taxon>Craniata</taxon>
        <taxon>Vertebrata</taxon>
        <taxon>Euteleostomi</taxon>
        <taxon>Amphibia</taxon>
        <taxon>Batrachia</taxon>
        <taxon>Anura</taxon>
        <taxon>Pipoidea</taxon>
        <taxon>Pipidae</taxon>
        <taxon>Xenopodinae</taxon>
        <taxon>Xenopus</taxon>
        <taxon>Xenopus</taxon>
    </lineage>
</organism>
<protein>
    <recommendedName>
        <fullName>GAS2-like protein 2B</fullName>
    </recommendedName>
    <alternativeName>
        <fullName>growth arrest specific 2 like 2 B</fullName>
    </alternativeName>
</protein>
<proteinExistence type="inferred from homology"/>
<keyword id="KW-0966">Cell projection</keyword>
<keyword id="KW-0963">Cytoplasm</keyword>
<keyword id="KW-0206">Cytoskeleton</keyword>
<keyword id="KW-1185">Reference proteome</keyword>
<comment type="function">
    <text evidence="4">Together with gas2l2.L, regulates ciliary orientation and performance.</text>
</comment>
<comment type="subcellular location">
    <subcellularLocation>
        <location evidence="5">Cytoplasm</location>
        <location evidence="5">Cytoskeleton</location>
    </subcellularLocation>
    <subcellularLocation>
        <location evidence="4">Cytoplasm</location>
        <location evidence="4">Cytoskeleton</location>
        <location evidence="4">Cilium basal body</location>
    </subcellularLocation>
</comment>
<comment type="disruption phenotype">
    <text evidence="4">Morpholino knockdown of both gas2l2.L and gas2l2.s resulted in mosiac embryos and impacted the number and distribution of basal bodies on the surface of ciliated cells (PubMed:30665704). As a result, ciliary orientation was significantly reduced (PubMed:30665704).</text>
</comment>
<comment type="similarity">
    <text evidence="5">Belongs to the GAS2 family.</text>
</comment>
<comment type="caution">
    <text evidence="4">Due to the high similarity between gas2l2.L and gas2l2.S, the morpholinos used for knockdown target both gas2l2.L and gas2l2.S RNA.</text>
</comment>
<name>G2L2S_XENLA</name>
<evidence type="ECO:0000255" key="1">
    <source>
        <dbReference type="PROSITE-ProRule" id="PRU00044"/>
    </source>
</evidence>
<evidence type="ECO:0000255" key="2">
    <source>
        <dbReference type="PROSITE-ProRule" id="PRU00792"/>
    </source>
</evidence>
<evidence type="ECO:0000256" key="3">
    <source>
        <dbReference type="SAM" id="MobiDB-lite"/>
    </source>
</evidence>
<evidence type="ECO:0000269" key="4">
    <source>
    </source>
</evidence>
<evidence type="ECO:0000305" key="5"/>
<evidence type="ECO:0000312" key="6">
    <source>
        <dbReference type="EMBL" id="OCT92251.1"/>
    </source>
</evidence>
<evidence type="ECO:0000312" key="7">
    <source>
        <dbReference type="Proteomes" id="UP000186698"/>
    </source>
</evidence>
<evidence type="ECO:0000312" key="8">
    <source>
        <dbReference type="Xenbase" id="XB-GENE-17330204"/>
    </source>
</evidence>